<dbReference type="EC" id="3.2.1.143" evidence="5"/>
<dbReference type="EMBL" id="U78975">
    <property type="protein sequence ID" value="AAB53370.1"/>
    <property type="molecule type" value="mRNA"/>
</dbReference>
<dbReference type="RefSeq" id="NP_776563.1">
    <property type="nucleotide sequence ID" value="NM_174138.3"/>
</dbReference>
<dbReference type="SMR" id="O02776"/>
<dbReference type="FunCoup" id="O02776">
    <property type="interactions" value="3327"/>
</dbReference>
<dbReference type="STRING" id="9913.ENSBTAP00000031225"/>
<dbReference type="BindingDB" id="O02776"/>
<dbReference type="ChEMBL" id="CHEMBL4279"/>
<dbReference type="PaxDb" id="9913-ENSBTAP00000031225"/>
<dbReference type="GeneID" id="281377"/>
<dbReference type="KEGG" id="bta:281377"/>
<dbReference type="CTD" id="8505"/>
<dbReference type="eggNOG" id="KOG2064">
    <property type="taxonomic scope" value="Eukaryota"/>
</dbReference>
<dbReference type="InParanoid" id="O02776"/>
<dbReference type="OrthoDB" id="1937899at2759"/>
<dbReference type="BRENDA" id="3.2.1.143">
    <property type="organism ID" value="908"/>
</dbReference>
<dbReference type="Proteomes" id="UP000009136">
    <property type="component" value="Unplaced"/>
</dbReference>
<dbReference type="GO" id="GO:0005737">
    <property type="term" value="C:cytoplasm"/>
    <property type="evidence" value="ECO:0000318"/>
    <property type="project" value="GO_Central"/>
</dbReference>
<dbReference type="GO" id="GO:0005634">
    <property type="term" value="C:nucleus"/>
    <property type="evidence" value="ECO:0000318"/>
    <property type="project" value="GO_Central"/>
</dbReference>
<dbReference type="GO" id="GO:0004649">
    <property type="term" value="F:poly(ADP-ribose) glycohydrolase activity"/>
    <property type="evidence" value="ECO:0000314"/>
    <property type="project" value="CACAO"/>
</dbReference>
<dbReference type="GO" id="GO:1990966">
    <property type="term" value="P:ATP generation from poly-ADP-D-ribose"/>
    <property type="evidence" value="ECO:0000250"/>
    <property type="project" value="UniProtKB"/>
</dbReference>
<dbReference type="GO" id="GO:0005975">
    <property type="term" value="P:carbohydrate metabolic process"/>
    <property type="evidence" value="ECO:0007669"/>
    <property type="project" value="InterPro"/>
</dbReference>
<dbReference type="GO" id="GO:0006974">
    <property type="term" value="P:DNA damage response"/>
    <property type="evidence" value="ECO:0007669"/>
    <property type="project" value="UniProtKB-KW"/>
</dbReference>
<dbReference type="GO" id="GO:0009225">
    <property type="term" value="P:nucleotide-sugar metabolic process"/>
    <property type="evidence" value="ECO:0000318"/>
    <property type="project" value="GO_Central"/>
</dbReference>
<dbReference type="GO" id="GO:0006282">
    <property type="term" value="P:regulation of DNA repair"/>
    <property type="evidence" value="ECO:0000318"/>
    <property type="project" value="GO_Central"/>
</dbReference>
<dbReference type="InterPro" id="IPR046372">
    <property type="entry name" value="PARG_cat_C"/>
</dbReference>
<dbReference type="InterPro" id="IPR048362">
    <property type="entry name" value="PARG_helical"/>
</dbReference>
<dbReference type="InterPro" id="IPR007724">
    <property type="entry name" value="Poly_GlycHdrlase"/>
</dbReference>
<dbReference type="PANTHER" id="PTHR12837">
    <property type="entry name" value="POLY ADP-RIBOSE GLYCOHYDROLASE"/>
    <property type="match status" value="1"/>
</dbReference>
<dbReference type="PANTHER" id="PTHR12837:SF15">
    <property type="entry name" value="POLY(ADP-RIBOSE) GLYCOHYDROLASE"/>
    <property type="match status" value="1"/>
</dbReference>
<dbReference type="Pfam" id="PF05028">
    <property type="entry name" value="PARG_cat_C"/>
    <property type="match status" value="1"/>
</dbReference>
<dbReference type="Pfam" id="PF20811">
    <property type="entry name" value="PARG_cat_N"/>
    <property type="match status" value="1"/>
</dbReference>
<protein>
    <recommendedName>
        <fullName evidence="6">Poly(ADP-ribose) glycohydrolase</fullName>
        <ecNumber evidence="5">3.2.1.143</ecNumber>
    </recommendedName>
</protein>
<sequence>MSAGPGCEPCTKRPRWDAAATSPPAASDARSFPGRQRRVLDSKDAPVQFRVPPSSSGCALGRAGQHRGSATSLVFKQKTITSWMDTKGIKTVESESLHSKENNNTREESMMSSVQKDNFYQHNMEKLENVSQLGFDKSPVEKGTQYLKQHQTAAMCKWQNEGPHSERLLESEPPAVTLVPEQFSNANVDQSSPKDDHSDTNSEESRDNQQFLTHVKLANAKQTMEDEQGREARSHQKCGKACHPAEACAGCQQEETDVVSESPLSDTGSEDVGTGLKNANRLNRQESSLGNSPPFEKESEPESPMDVDNSKNSCQDSEADEETSPGFDEQEDSSSAQTANKPSRFQPREADTELRKRSSAKGGEIRLHFQFEGGESRAGMNDVNAKRPGSTSSLNVECRNSKQHGRKDSKITDHFMRVPKAEDKRKEQCEMKHQRTERKIPKYIPPHLSPDKKWLGTPIEEMRRMPRCGIRLPPLRPSANHTVTIRVDLLRIGEVPKPFPTHFKDLWDNKHVKMPCSEQNLYPVEDENGERAAGSRWELIQTALLNRLTRPQNLKDAILKYNVAYSKKWDFTALIDFWDKVLEEAEAQHLYQSILPDMVKIALCLPNICTQPIPLLKQKMNHSITMSQEQIASLLANAFFCTFPRRNAKMKSEYSSYPDINFNRLFEGRSSRKPEKLKTLFCYFRRVTEKKPTGLVTFTRQSLEDFPEWERCEKLLTRLHVTYEGTIEGNGQGMLQVDFANRFVGGGVTSAGLVQEEIRFLINPELIVSRLFTEVLDHNECLIITGTEQYSEYTGYAETYRWARSHEDRSERDDWQRRTTEIVAIDALHFRRYLDQFVPEKIRRELNKAYCGFLRPGVSSENLSAVATGNWGCGAFGGDARLKALIQILAAAVAERDVVYFTFGDSELMRDIYSMHTFLTERKLTVGEVYKLLLRYYNEECRNCSTPGPDIKLYPFIYHAVESCTQTTNQPGQRTGA</sequence>
<evidence type="ECO:0000250" key="1">
    <source>
        <dbReference type="UniProtKB" id="O88622"/>
    </source>
</evidence>
<evidence type="ECO:0000250" key="2">
    <source>
        <dbReference type="UniProtKB" id="Q86W56"/>
    </source>
</evidence>
<evidence type="ECO:0000250" key="3">
    <source>
        <dbReference type="UniProtKB" id="Q9QYM2"/>
    </source>
</evidence>
<evidence type="ECO:0000256" key="4">
    <source>
        <dbReference type="SAM" id="MobiDB-lite"/>
    </source>
</evidence>
<evidence type="ECO:0000269" key="5">
    <source>
    </source>
</evidence>
<evidence type="ECO:0000303" key="6">
    <source>
    </source>
</evidence>
<evidence type="ECO:0000305" key="7"/>
<keyword id="KW-0007">Acetylation</keyword>
<keyword id="KW-0903">Direct protein sequencing</keyword>
<keyword id="KW-0227">DNA damage</keyword>
<keyword id="KW-0378">Hydrolase</keyword>
<keyword id="KW-0539">Nucleus</keyword>
<keyword id="KW-0597">Phosphoprotein</keyword>
<keyword id="KW-1185">Reference proteome</keyword>
<organism>
    <name type="scientific">Bos taurus</name>
    <name type="common">Bovine</name>
    <dbReference type="NCBI Taxonomy" id="9913"/>
    <lineage>
        <taxon>Eukaryota</taxon>
        <taxon>Metazoa</taxon>
        <taxon>Chordata</taxon>
        <taxon>Craniata</taxon>
        <taxon>Vertebrata</taxon>
        <taxon>Euteleostomi</taxon>
        <taxon>Mammalia</taxon>
        <taxon>Eutheria</taxon>
        <taxon>Laurasiatheria</taxon>
        <taxon>Artiodactyla</taxon>
        <taxon>Ruminantia</taxon>
        <taxon>Pecora</taxon>
        <taxon>Bovidae</taxon>
        <taxon>Bovinae</taxon>
        <taxon>Bos</taxon>
    </lineage>
</organism>
<comment type="function">
    <text evidence="2 5">Poly(ADP-ribose) glycohydrolase that degrades poly(ADP-ribose) by hydrolyzing the ribose-ribose bonds present in poly(ADP-ribose) (PubMed:15658938). PARG acts both as an endo- and exoglycosidase, releasing poly(ADP-ribose) of different length as well as ADP-ribose monomers. It is however unable to cleave the ester bond between the terminal ADP-ribose and ADP-ribosylated residues, leaving proteins that are mono-ADP-ribosylated. Poly(ADP-ribose) is synthesized after DNA damage is only present transiently and is rapidly degraded by PARG. Required to prevent detrimental accumulation of poly(ADP-ribose) upon prolonged replicative stress, while it is not required for recovery from transient replicative stress. Responsible for the prevalence of mono-ADP-ribosylated proteins in cells, thanks to its ability to degrade poly(ADP-ribose) without cleaving the terminal protein-ribose bond. Required for retinoid acid-dependent gene transactivation, probably by removing poly(ADP-ribose) from histone demethylase KDM4D, allowing chromatin derepression at RAR-dependent gene promoters. Involved in the synthesis of ATP in the nucleus, together with PARP1, NMNAT1 and NUDT5. Nuclear ATP generation is required for extensive chromatin remodeling events that are energy-consuming (By similarity).</text>
</comment>
<comment type="catalytic activity">
    <reaction evidence="5">
        <text>[(1''-&gt;2')-ADP-alpha-D-ribose](n) + H2O = [(1''-&gt;2')-ADP-alpha-D-ribose](n-1) + ADP-D-ribose</text>
        <dbReference type="Rhea" id="RHEA:52216"/>
        <dbReference type="Rhea" id="RHEA-COMP:16922"/>
        <dbReference type="Rhea" id="RHEA-COMP:16923"/>
        <dbReference type="ChEBI" id="CHEBI:15377"/>
        <dbReference type="ChEBI" id="CHEBI:57967"/>
        <dbReference type="ChEBI" id="CHEBI:142512"/>
        <dbReference type="EC" id="3.2.1.143"/>
    </reaction>
</comment>
<comment type="subunit">
    <text evidence="2">Interacts with PCNA. Interacts with NUDT5.</text>
</comment>
<comment type="subcellular location">
    <subcellularLocation>
        <location evidence="2">Nucleus</location>
    </subcellularLocation>
    <text evidence="2">Colocalizes with PCNA at replication foci. Relocalizes to the cytoplasm in response to DNA damage (By similarity).</text>
</comment>
<comment type="domain">
    <text evidence="2">The PIP-box mediates interaction with PCNA and localization to replication foci.</text>
</comment>
<comment type="similarity">
    <text evidence="7">Belongs to the poly(ADP-ribose) glycohydrolase family.</text>
</comment>
<reference key="1">
    <citation type="journal article" date="1997" name="J. Biol. Chem.">
        <title>Isolation and characterization of the cDNA encoding bovine poly(ADP-ribose) glycohydrolase.</title>
        <authorList>
            <person name="Lin W."/>
            <person name="Ame J.-C."/>
            <person name="Aboul-Ela N."/>
            <person name="Jacobson E.L."/>
            <person name="Jacobson M.K."/>
        </authorList>
    </citation>
    <scope>NUCLEOTIDE SEQUENCE [MRNA]</scope>
    <scope>PROTEIN SEQUENCE OF 601-616; 760-801 AND 849-877</scope>
    <source>
        <tissue>Thymus</tissue>
    </source>
</reference>
<reference key="2">
    <citation type="journal article" date="2005" name="Biochem. J.">
        <title>Identification of three critical acidic residues of poly(ADP-ribose) glycohydrolase involved in catalysis: determining the PARG catalytic domain.</title>
        <authorList>
            <person name="Patel C.N."/>
            <person name="Koh D.W."/>
            <person name="Jacobson M.K."/>
            <person name="Oliveira M.A."/>
        </authorList>
    </citation>
    <scope>FUNCTION</scope>
    <scope>CATALYTIC ACTIVITY</scope>
    <scope>MUTAGENESIS OF ASP-738; GLU-756 AND GLU-757</scope>
    <scope>ACTIVE SITE</scope>
</reference>
<name>PARG_BOVIN</name>
<proteinExistence type="evidence at protein level"/>
<accession>O02776</accession>
<gene>
    <name evidence="6" type="primary">PARG</name>
</gene>
<feature type="chain" id="PRO_0000066601" description="Poly(ADP-ribose) glycohydrolase">
    <location>
        <begin position="1"/>
        <end position="977"/>
    </location>
</feature>
<feature type="region of interest" description="A-domain" evidence="2">
    <location>
        <begin position="1"/>
        <end position="457"/>
    </location>
</feature>
<feature type="region of interest" description="Disordered" evidence="4">
    <location>
        <begin position="1"/>
        <end position="69"/>
    </location>
</feature>
<feature type="region of interest" description="Disordered" evidence="4">
    <location>
        <begin position="184"/>
        <end position="407"/>
    </location>
</feature>
<feature type="region of interest" description="Catalytic" evidence="2">
    <location>
        <begin position="611"/>
        <end position="796"/>
    </location>
</feature>
<feature type="short sequence motif" description="Nuclear localization signal" evidence="2">
    <location>
        <begin position="10"/>
        <end position="16"/>
    </location>
</feature>
<feature type="short sequence motif" description="PIP-box (PCNA interacting peptide)" evidence="2">
    <location>
        <begin position="77"/>
        <end position="84"/>
    </location>
</feature>
<feature type="compositionally biased region" description="Low complexity" evidence="4">
    <location>
        <begin position="17"/>
        <end position="29"/>
    </location>
</feature>
<feature type="compositionally biased region" description="Basic and acidic residues" evidence="4">
    <location>
        <begin position="192"/>
        <end position="207"/>
    </location>
</feature>
<feature type="compositionally biased region" description="Basic and acidic residues" evidence="4">
    <location>
        <begin position="223"/>
        <end position="234"/>
    </location>
</feature>
<feature type="compositionally biased region" description="Polar residues" evidence="4">
    <location>
        <begin position="280"/>
        <end position="291"/>
    </location>
</feature>
<feature type="compositionally biased region" description="Acidic residues" evidence="4">
    <location>
        <begin position="317"/>
        <end position="332"/>
    </location>
</feature>
<feature type="compositionally biased region" description="Polar residues" evidence="4">
    <location>
        <begin position="333"/>
        <end position="343"/>
    </location>
</feature>
<feature type="compositionally biased region" description="Basic and acidic residues" evidence="4">
    <location>
        <begin position="346"/>
        <end position="356"/>
    </location>
</feature>
<feature type="active site" evidence="5">
    <location>
        <position position="738"/>
    </location>
</feature>
<feature type="active site" evidence="5">
    <location>
        <position position="756"/>
    </location>
</feature>
<feature type="active site" evidence="5">
    <location>
        <position position="757"/>
    </location>
</feature>
<feature type="binding site" evidence="2">
    <location>
        <begin position="727"/>
        <end position="728"/>
    </location>
    <ligand>
        <name>substrate</name>
    </ligand>
</feature>
<feature type="binding site" evidence="2">
    <location>
        <position position="741"/>
    </location>
    <ligand>
        <name>substrate</name>
    </ligand>
</feature>
<feature type="binding site" evidence="2">
    <location>
        <position position="755"/>
    </location>
    <ligand>
        <name>substrate</name>
    </ligand>
</feature>
<feature type="binding site" evidence="3">
    <location>
        <position position="796"/>
    </location>
    <ligand>
        <name>substrate</name>
    </ligand>
</feature>
<feature type="binding site" evidence="2">
    <location>
        <begin position="870"/>
        <end position="875"/>
    </location>
    <ligand>
        <name>substrate</name>
    </ligand>
</feature>
<feature type="modified residue" description="Phosphoserine" evidence="2">
    <location>
        <position position="69"/>
    </location>
</feature>
<feature type="modified residue" description="Phosphoserine" evidence="2">
    <location>
        <position position="138"/>
    </location>
</feature>
<feature type="modified residue" description="Phosphoserine" evidence="2">
    <location>
        <position position="198"/>
    </location>
</feature>
<feature type="modified residue" description="Phosphothreonine" evidence="2">
    <location>
        <position position="200"/>
    </location>
</feature>
<feature type="modified residue" description="Phosphoserine" evidence="2">
    <location>
        <position position="262"/>
    </location>
</feature>
<feature type="modified residue" description="Phosphoserine" evidence="2">
    <location>
        <position position="265"/>
    </location>
</feature>
<feature type="modified residue" description="Phosphoserine" evidence="2">
    <location>
        <position position="287"/>
    </location>
</feature>
<feature type="modified residue" description="Phosphoserine" evidence="2">
    <location>
        <position position="292"/>
    </location>
</feature>
<feature type="modified residue" description="Phosphoserine" evidence="2">
    <location>
        <position position="299"/>
    </location>
</feature>
<feature type="modified residue" description="Phosphoserine" evidence="2">
    <location>
        <position position="303"/>
    </location>
</feature>
<feature type="modified residue" description="Phosphoserine" evidence="2">
    <location>
        <position position="317"/>
    </location>
</feature>
<feature type="modified residue" description="N6-acetyllysine" evidence="1">
    <location>
        <position position="341"/>
    </location>
</feature>
<feature type="modified residue" description="Phosphoserine" evidence="2">
    <location>
        <position position="449"/>
    </location>
</feature>
<feature type="mutagenesis site" description="Abolishes catalytic activity." evidence="5">
    <original>D</original>
    <variation>N</variation>
    <location>
        <position position="738"/>
    </location>
</feature>
<feature type="mutagenesis site" description="Abolishes catalytic activity." evidence="5">
    <original>E</original>
    <variation>N</variation>
    <location>
        <position position="756"/>
    </location>
</feature>
<feature type="mutagenesis site" description="Abolishes catalytic activity." evidence="5">
    <original>E</original>
    <variation>N</variation>
    <location>
        <position position="757"/>
    </location>
</feature>